<organism evidence="4">
    <name type="scientific">Melicytus latifolius</name>
    <name type="common">Norfolk Island mahoe</name>
    <name type="synonym">Hymenanthera latifolia</name>
    <dbReference type="NCBI Taxonomy" id="212268"/>
    <lineage>
        <taxon>Eukaryota</taxon>
        <taxon>Viridiplantae</taxon>
        <taxon>Streptophyta</taxon>
        <taxon>Embryophyta</taxon>
        <taxon>Tracheophyta</taxon>
        <taxon>Spermatophyta</taxon>
        <taxon>Magnoliopsida</taxon>
        <taxon>eudicotyledons</taxon>
        <taxon>Gunneridae</taxon>
        <taxon>Pentapetalae</taxon>
        <taxon>rosids</taxon>
        <taxon>fabids</taxon>
        <taxon>Malpighiales</taxon>
        <taxon>Violaceae</taxon>
        <taxon>Melicytus</taxon>
    </lineage>
</organism>
<feature type="peptide" id="PRO_0000437511" description="Cyclotide mela-5" evidence="2 3">
    <location>
        <begin position="1"/>
        <end position="30"/>
    </location>
</feature>
<feature type="disulfide bond" evidence="2">
    <location>
        <begin position="6"/>
        <end position="20"/>
    </location>
</feature>
<feature type="disulfide bond" evidence="2">
    <location>
        <begin position="10"/>
        <end position="22"/>
    </location>
</feature>
<feature type="disulfide bond" evidence="2">
    <location>
        <begin position="15"/>
        <end position="27"/>
    </location>
</feature>
<feature type="cross-link" description="Cyclopeptide (Gly-Asp)" evidence="6">
    <location>
        <begin position="1"/>
        <end position="30"/>
    </location>
</feature>
<keyword id="KW-0903">Direct protein sequencing</keyword>
<keyword id="KW-1015">Disulfide bond</keyword>
<keyword id="KW-0960">Knottin</keyword>
<keyword id="KW-0611">Plant defense</keyword>
<protein>
    <recommendedName>
        <fullName evidence="4">Cyclotide mela-5</fullName>
    </recommendedName>
</protein>
<proteinExistence type="evidence at protein level"/>
<evidence type="ECO:0000250" key="1">
    <source>
        <dbReference type="UniProtKB" id="C0HK28"/>
    </source>
</evidence>
<evidence type="ECO:0000255" key="2">
    <source>
        <dbReference type="PROSITE-ProRule" id="PRU00395"/>
    </source>
</evidence>
<evidence type="ECO:0000269" key="3">
    <source>
    </source>
</evidence>
<evidence type="ECO:0000303" key="4">
    <source>
    </source>
</evidence>
<evidence type="ECO:0000305" key="5"/>
<evidence type="ECO:0000305" key="6">
    <source>
    </source>
</evidence>
<sequence length="30" mass="3198">GSAIACGESCFKFKCYTPGCSCSYPICKKD</sequence>
<reference evidence="5" key="1">
    <citation type="journal article" date="2015" name="ACS Chem. Biol.">
        <title>Lysine-rich cyclotides: a new subclass of circular knotted proteins from Violaceae.</title>
        <authorList>
            <person name="Ravipati A.S."/>
            <person name="Henriques S.T."/>
            <person name="Poth A.G."/>
            <person name="Kaas Q."/>
            <person name="Wang C.K."/>
            <person name="Colgrave M.L."/>
            <person name="Craik D.J."/>
        </authorList>
    </citation>
    <scope>PROTEIN SEQUENCE</scope>
    <scope>MASS SPECTROMETRY</scope>
    <scope>IDENTIFICATION BY MASS SPECTROMETRY</scope>
    <scope>PRESENCE OF DISULFIDE BONDS</scope>
</reference>
<name>CYML5_MELLF</name>
<comment type="function">
    <text evidence="1 2">Probably participates in a plant defense mechanism (Potential). Binds to and induces leakage in phospholipd membranes, particularly ones containing 1-palmitoyl-2-oleophosphatidylethanolamine (POPE) (By similarity).</text>
</comment>
<comment type="domain">
    <text evidence="5">The presence of a 'disulfide through disulfide knot' structurally defines this protein as a knottin.</text>
</comment>
<comment type="PTM">
    <text evidence="2">This is a cyclic peptide.</text>
</comment>
<comment type="PTM">
    <text evidence="3">Contains 3 disulfide bonds.</text>
</comment>
<comment type="mass spectrometry" mass="3171.31" method="Electrospray" evidence="3"/>
<comment type="similarity">
    <text evidence="4">Belongs to the cyclotide family. Moebuis subfamily.</text>
</comment>
<comment type="caution">
    <text evidence="2">This peptide is cyclic. The start position was chosen by similarity to Oak1 (kalata B1) for which the DNA sequence is known.</text>
</comment>
<accession>C0HK32</accession>
<dbReference type="SMR" id="C0HK32"/>
<dbReference type="GO" id="GO:0006952">
    <property type="term" value="P:defense response"/>
    <property type="evidence" value="ECO:0007669"/>
    <property type="project" value="UniProtKB-KW"/>
</dbReference>
<dbReference type="InterPro" id="IPR005535">
    <property type="entry name" value="Cyclotide"/>
</dbReference>
<dbReference type="InterPro" id="IPR036146">
    <property type="entry name" value="Cyclotide_sf"/>
</dbReference>
<dbReference type="Pfam" id="PF03784">
    <property type="entry name" value="Cyclotide"/>
    <property type="match status" value="1"/>
</dbReference>
<dbReference type="SUPFAM" id="SSF57038">
    <property type="entry name" value="Cyclotides"/>
    <property type="match status" value="1"/>
</dbReference>
<dbReference type="PROSITE" id="PS51052">
    <property type="entry name" value="CYCLOTIDE"/>
    <property type="match status" value="1"/>
</dbReference>